<sequence length="314" mass="33884">MSVLDQNAVDINPRISEAEVGDYIALLKPRVMSLVIFTALVGMAMAPGHFHPVLAITSLLCIAVGAGASGALNMALEGDIDAKMSRTANRPIPRGRITRPEAMTFGMTLAFFSVMTLGILVNWIAGALLAFTIFFYVVIYTMWLKRWTAQNIVIGGAAGALPPVVAWAAVTGTVDVEPLLLFAIIFFWTPPHFWALALFRSDDYARAGIPMLPNVAGPDATRLQILLYTIVLIAVAAAPWALGYFDAVYGVVSLILGAGMLVLAINVYMRRERSQSLRATRKLFAFSILYLFALFATLLAEVVFRALAPMAGGA</sequence>
<reference key="1">
    <citation type="journal article" date="1995" name="Mol. Microbiol.">
        <title>A TnphoA insertion within the Bradyrhizobium japonicum sipS gene, homologous to prokaryotic signal peptidases, results in extensive changes in the expression of PBM-specific nodulins of infected soybean (Glycine max) cells.</title>
        <authorList>
            <person name="Muller P."/>
            <person name="Ahrens K."/>
            <person name="Keller T."/>
            <person name="Klaucke A."/>
        </authorList>
    </citation>
    <scope>NUCLEOTIDE SEQUENCE [GENOMIC DNA]</scope>
    <source>
        <strain>USDA 110spc4</strain>
    </source>
</reference>
<reference key="2">
    <citation type="submission" date="1999-05" db="EMBL/GenBank/DDBJ databases">
        <title>Factors involved in biogenesis of active cytochrome aa3 encoded by the coxBAEFGC gene cluster from Bradyrhizobium japonicum.</title>
        <authorList>
            <person name="Rossmann R."/>
            <person name="Loferer H."/>
            <person name="Rossi P."/>
            <person name="Hennecke H."/>
        </authorList>
    </citation>
    <scope>NUCLEOTIDE SEQUENCE [GENOMIC DNA]</scope>
    <source>
        <strain>USDA 110spc4</strain>
    </source>
</reference>
<reference key="3">
    <citation type="submission" date="2000-06" db="EMBL/GenBank/DDBJ databases">
        <title>Extended sequencing of a DNA fragment of B. japonicum adjacent to the cox operon.</title>
        <authorList>
            <person name="Mueller P."/>
        </authorList>
    </citation>
    <scope>NUCLEOTIDE SEQUENCE [GENOMIC DNA]</scope>
    <source>
        <strain>USDA 110spc4</strain>
    </source>
</reference>
<reference key="4">
    <citation type="journal article" date="2002" name="DNA Res.">
        <title>Complete genomic sequence of nitrogen-fixing symbiotic bacterium Bradyrhizobium japonicum USDA110.</title>
        <authorList>
            <person name="Kaneko T."/>
            <person name="Nakamura Y."/>
            <person name="Sato S."/>
            <person name="Minamisawa K."/>
            <person name="Uchiumi T."/>
            <person name="Sasamoto S."/>
            <person name="Watanabe A."/>
            <person name="Idesawa K."/>
            <person name="Iriguchi M."/>
            <person name="Kawashima K."/>
            <person name="Kohara M."/>
            <person name="Matsumoto M."/>
            <person name="Shimpo S."/>
            <person name="Tsuruoka H."/>
            <person name="Wada T."/>
            <person name="Yamada M."/>
            <person name="Tabata S."/>
        </authorList>
    </citation>
    <scope>NUCLEOTIDE SEQUENCE [LARGE SCALE GENOMIC DNA]</scope>
    <source>
        <strain>JCM 10833 / BCRC 13528 / IAM 13628 / NBRC 14792 / USDA 110</strain>
    </source>
</reference>
<comment type="function">
    <text evidence="1">Converts heme B (protoheme IX) to heme O by substitution of the vinyl group on carbon 2 of heme B porphyrin ring with a hydroxyethyl farnesyl side group.</text>
</comment>
<comment type="catalytic activity">
    <reaction evidence="1">
        <text>heme b + (2E,6E)-farnesyl diphosphate + H2O = Fe(II)-heme o + diphosphate</text>
        <dbReference type="Rhea" id="RHEA:28070"/>
        <dbReference type="ChEBI" id="CHEBI:15377"/>
        <dbReference type="ChEBI" id="CHEBI:33019"/>
        <dbReference type="ChEBI" id="CHEBI:60344"/>
        <dbReference type="ChEBI" id="CHEBI:60530"/>
        <dbReference type="ChEBI" id="CHEBI:175763"/>
        <dbReference type="EC" id="2.5.1.141"/>
    </reaction>
</comment>
<comment type="pathway">
    <text evidence="1">Porphyrin-containing compound metabolism; heme O biosynthesis; heme O from protoheme: step 1/1.</text>
</comment>
<comment type="subcellular location">
    <subcellularLocation>
        <location evidence="1">Cell inner membrane</location>
        <topology evidence="1">Multi-pass membrane protein</topology>
    </subcellularLocation>
</comment>
<comment type="miscellaneous">
    <text evidence="1">Carbon 2 of the heme B porphyrin ring is defined according to the Fischer nomenclature.</text>
</comment>
<comment type="similarity">
    <text evidence="1">Belongs to the UbiA prenyltransferase family. Protoheme IX farnesyltransferase subfamily.</text>
</comment>
<name>COXX_BRADU</name>
<dbReference type="EC" id="2.5.1.141" evidence="1"/>
<dbReference type="EMBL" id="U33883">
    <property type="protein sequence ID" value="AAF78814.1"/>
    <property type="molecule type" value="Genomic_DNA"/>
</dbReference>
<dbReference type="EMBL" id="AJ242592">
    <property type="protein sequence ID" value="CAB56820.1"/>
    <property type="molecule type" value="Genomic_DNA"/>
</dbReference>
<dbReference type="EMBL" id="BA000040">
    <property type="protein sequence ID" value="BAC46437.1"/>
    <property type="molecule type" value="Genomic_DNA"/>
</dbReference>
<dbReference type="RefSeq" id="NP_767812.1">
    <property type="nucleotide sequence ID" value="NC_004463.1"/>
</dbReference>
<dbReference type="RefSeq" id="WP_011083991.1">
    <property type="nucleotide sequence ID" value="NC_004463.1"/>
</dbReference>
<dbReference type="SMR" id="Q9RM98"/>
<dbReference type="FunCoup" id="Q9RM98">
    <property type="interactions" value="532"/>
</dbReference>
<dbReference type="STRING" id="224911.AAV28_02745"/>
<dbReference type="EnsemblBacteria" id="BAC46437">
    <property type="protein sequence ID" value="BAC46437"/>
    <property type="gene ID" value="BAC46437"/>
</dbReference>
<dbReference type="GeneID" id="46488447"/>
<dbReference type="KEGG" id="bja:blr1172"/>
<dbReference type="PATRIC" id="fig|224911.44.peg.575"/>
<dbReference type="eggNOG" id="COG0109">
    <property type="taxonomic scope" value="Bacteria"/>
</dbReference>
<dbReference type="HOGENOM" id="CLU_029631_0_2_5"/>
<dbReference type="InParanoid" id="Q9RM98"/>
<dbReference type="OrthoDB" id="9814417at2"/>
<dbReference type="PhylomeDB" id="Q9RM98"/>
<dbReference type="UniPathway" id="UPA00834">
    <property type="reaction ID" value="UER00712"/>
</dbReference>
<dbReference type="Proteomes" id="UP000002526">
    <property type="component" value="Chromosome"/>
</dbReference>
<dbReference type="GO" id="GO:0005886">
    <property type="term" value="C:plasma membrane"/>
    <property type="evidence" value="ECO:0007669"/>
    <property type="project" value="UniProtKB-SubCell"/>
</dbReference>
<dbReference type="GO" id="GO:0008495">
    <property type="term" value="F:protoheme IX farnesyltransferase activity"/>
    <property type="evidence" value="ECO:0000318"/>
    <property type="project" value="GO_Central"/>
</dbReference>
<dbReference type="GO" id="GO:0006783">
    <property type="term" value="P:heme biosynthetic process"/>
    <property type="evidence" value="ECO:0000318"/>
    <property type="project" value="GO_Central"/>
</dbReference>
<dbReference type="GO" id="GO:0048034">
    <property type="term" value="P:heme O biosynthetic process"/>
    <property type="evidence" value="ECO:0007669"/>
    <property type="project" value="UniProtKB-UniRule"/>
</dbReference>
<dbReference type="CDD" id="cd13957">
    <property type="entry name" value="PT_UbiA_Cox10"/>
    <property type="match status" value="1"/>
</dbReference>
<dbReference type="FunFam" id="1.10.357.140:FF:000001">
    <property type="entry name" value="Protoheme IX farnesyltransferase"/>
    <property type="match status" value="1"/>
</dbReference>
<dbReference type="Gene3D" id="1.10.357.140">
    <property type="entry name" value="UbiA prenyltransferase"/>
    <property type="match status" value="1"/>
</dbReference>
<dbReference type="HAMAP" id="MF_00154">
    <property type="entry name" value="CyoE_CtaB"/>
    <property type="match status" value="1"/>
</dbReference>
<dbReference type="InterPro" id="IPR006369">
    <property type="entry name" value="Protohaem_IX_farnesylTrfase"/>
</dbReference>
<dbReference type="InterPro" id="IPR000537">
    <property type="entry name" value="UbiA_prenyltransferase"/>
</dbReference>
<dbReference type="InterPro" id="IPR030470">
    <property type="entry name" value="UbiA_prenylTrfase_CS"/>
</dbReference>
<dbReference type="InterPro" id="IPR044878">
    <property type="entry name" value="UbiA_sf"/>
</dbReference>
<dbReference type="NCBIfam" id="TIGR01473">
    <property type="entry name" value="cyoE_ctaB"/>
    <property type="match status" value="1"/>
</dbReference>
<dbReference type="NCBIfam" id="NF003349">
    <property type="entry name" value="PRK04375.1-2"/>
    <property type="match status" value="1"/>
</dbReference>
<dbReference type="PANTHER" id="PTHR43448:SF7">
    <property type="entry name" value="4-HYDROXYBENZOATE SOLANESYLTRANSFERASE"/>
    <property type="match status" value="1"/>
</dbReference>
<dbReference type="PANTHER" id="PTHR43448">
    <property type="entry name" value="PROTOHEME IX FARNESYLTRANSFERASE, MITOCHONDRIAL"/>
    <property type="match status" value="1"/>
</dbReference>
<dbReference type="Pfam" id="PF01040">
    <property type="entry name" value="UbiA"/>
    <property type="match status" value="1"/>
</dbReference>
<dbReference type="PROSITE" id="PS00943">
    <property type="entry name" value="UBIA"/>
    <property type="match status" value="1"/>
</dbReference>
<protein>
    <recommendedName>
        <fullName evidence="1">Protoheme IX farnesyltransferase</fullName>
        <ecNumber evidence="1">2.5.1.141</ecNumber>
    </recommendedName>
    <alternativeName>
        <fullName evidence="1">Heme B farnesyltransferase</fullName>
    </alternativeName>
    <alternativeName>
        <fullName evidence="1">Heme O synthase</fullName>
    </alternativeName>
</protein>
<keyword id="KW-0997">Cell inner membrane</keyword>
<keyword id="KW-1003">Cell membrane</keyword>
<keyword id="KW-0350">Heme biosynthesis</keyword>
<keyword id="KW-0472">Membrane</keyword>
<keyword id="KW-1185">Reference proteome</keyword>
<keyword id="KW-0808">Transferase</keyword>
<keyword id="KW-0812">Transmembrane</keyword>
<keyword id="KW-1133">Transmembrane helix</keyword>
<evidence type="ECO:0000255" key="1">
    <source>
        <dbReference type="HAMAP-Rule" id="MF_00154"/>
    </source>
</evidence>
<proteinExistence type="inferred from homology"/>
<organism>
    <name type="scientific">Bradyrhizobium diazoefficiens (strain JCM 10833 / BCRC 13528 / IAM 13628 / NBRC 14792 / USDA 110)</name>
    <dbReference type="NCBI Taxonomy" id="224911"/>
    <lineage>
        <taxon>Bacteria</taxon>
        <taxon>Pseudomonadati</taxon>
        <taxon>Pseudomonadota</taxon>
        <taxon>Alphaproteobacteria</taxon>
        <taxon>Hyphomicrobiales</taxon>
        <taxon>Nitrobacteraceae</taxon>
        <taxon>Bradyrhizobium</taxon>
    </lineage>
</organism>
<accession>Q9RM98</accession>
<accession>Q79V03</accession>
<feature type="chain" id="PRO_0000327017" description="Protoheme IX farnesyltransferase">
    <location>
        <begin position="1"/>
        <end position="314"/>
    </location>
</feature>
<feature type="transmembrane region" description="Helical" evidence="1">
    <location>
        <begin position="31"/>
        <end position="51"/>
    </location>
</feature>
<feature type="transmembrane region" description="Helical" evidence="1">
    <location>
        <begin position="52"/>
        <end position="72"/>
    </location>
</feature>
<feature type="transmembrane region" description="Helical" evidence="1">
    <location>
        <begin position="119"/>
        <end position="139"/>
    </location>
</feature>
<feature type="transmembrane region" description="Helical" evidence="1">
    <location>
        <begin position="152"/>
        <end position="172"/>
    </location>
</feature>
<feature type="transmembrane region" description="Helical" evidence="1">
    <location>
        <begin position="179"/>
        <end position="199"/>
    </location>
</feature>
<feature type="transmembrane region" description="Helical" evidence="1">
    <location>
        <begin position="225"/>
        <end position="245"/>
    </location>
</feature>
<feature type="transmembrane region" description="Helical" evidence="1">
    <location>
        <begin position="247"/>
        <end position="267"/>
    </location>
</feature>
<feature type="transmembrane region" description="Helical" evidence="1">
    <location>
        <begin position="284"/>
        <end position="304"/>
    </location>
</feature>
<gene>
    <name evidence="1" type="primary">ctaB</name>
    <name type="synonym">coxE</name>
    <name type="ordered locus">blr1172</name>
</gene>